<proteinExistence type="evidence at transcript level"/>
<accession>P52215</accession>
<organism>
    <name type="scientific">Streptomyces coelicolor (strain ATCC BAA-471 / A3(2) / M145)</name>
    <dbReference type="NCBI Taxonomy" id="100226"/>
    <lineage>
        <taxon>Bacteria</taxon>
        <taxon>Bacillati</taxon>
        <taxon>Actinomycetota</taxon>
        <taxon>Actinomycetes</taxon>
        <taxon>Kitasatosporales</taxon>
        <taxon>Streptomycetaceae</taxon>
        <taxon>Streptomyces</taxon>
        <taxon>Streptomyces albidoflavus group</taxon>
    </lineage>
</organism>
<gene>
    <name evidence="4" type="primary">trxB</name>
    <name type="ordered locus">SCO3890</name>
    <name type="ORF">SCH24.12c</name>
</gene>
<reference key="1">
    <citation type="journal article" date="1998" name="Gene">
        <title>Gene organization in the trxA/B-oriC region of the Streptomyces coelicolor chromosome and comparison with other eubacteria.</title>
        <authorList>
            <person name="Gal-Mor O."/>
            <person name="Borovok I."/>
            <person name="Av-Gay Y."/>
            <person name="Cohen G."/>
            <person name="Aharonowitz Y."/>
        </authorList>
    </citation>
    <scope>NUCLEOTIDE SEQUENCE [GENOMIC DNA]</scope>
    <source>
        <strain>ATCC BAA-471 / A3(2) / M145</strain>
    </source>
</reference>
<reference key="2">
    <citation type="submission" date="1999-02" db="EMBL/GenBank/DDBJ databases">
        <authorList>
            <person name="Aharonowitz Y."/>
        </authorList>
    </citation>
    <scope>SEQUENCE REVISION</scope>
</reference>
<reference key="3">
    <citation type="journal article" date="2002" name="Nature">
        <title>Complete genome sequence of the model actinomycete Streptomyces coelicolor A3(2).</title>
        <authorList>
            <person name="Bentley S.D."/>
            <person name="Chater K.F."/>
            <person name="Cerdeno-Tarraga A.-M."/>
            <person name="Challis G.L."/>
            <person name="Thomson N.R."/>
            <person name="James K.D."/>
            <person name="Harris D.E."/>
            <person name="Quail M.A."/>
            <person name="Kieser H."/>
            <person name="Harper D."/>
            <person name="Bateman A."/>
            <person name="Brown S."/>
            <person name="Chandra G."/>
            <person name="Chen C.W."/>
            <person name="Collins M."/>
            <person name="Cronin A."/>
            <person name="Fraser A."/>
            <person name="Goble A."/>
            <person name="Hidalgo J."/>
            <person name="Hornsby T."/>
            <person name="Howarth S."/>
            <person name="Huang C.-H."/>
            <person name="Kieser T."/>
            <person name="Larke L."/>
            <person name="Murphy L.D."/>
            <person name="Oliver K."/>
            <person name="O'Neil S."/>
            <person name="Rabbinowitsch E."/>
            <person name="Rajandream M.A."/>
            <person name="Rutherford K.M."/>
            <person name="Rutter S."/>
            <person name="Seeger K."/>
            <person name="Saunders D."/>
            <person name="Sharp S."/>
            <person name="Squares R."/>
            <person name="Squares S."/>
            <person name="Taylor K."/>
            <person name="Warren T."/>
            <person name="Wietzorrek A."/>
            <person name="Woodward J.R."/>
            <person name="Barrell B.G."/>
            <person name="Parkhill J."/>
            <person name="Hopwood D.A."/>
        </authorList>
    </citation>
    <scope>NUCLEOTIDE SEQUENCE [LARGE SCALE GENOMIC DNA]</scope>
    <source>
        <strain>ATCC BAA-471 / A3(2) / M145</strain>
    </source>
</reference>
<reference key="4">
    <citation type="journal article" date="1998" name="EMBO J.">
        <title>sigmaR, an RNA polymerase sigma factor that modulates expression of the thioredoxin system in response to oxidative stress in Streptomyces coelicolor A3(2).</title>
        <authorList>
            <person name="Paget M.S."/>
            <person name="Kang J.G."/>
            <person name="Roe J.H."/>
            <person name="Buttner M.J."/>
        </authorList>
    </citation>
    <scope>INDUCTION</scope>
    <source>
        <strain>ATCC BAA-471 / A3(2) / M145</strain>
    </source>
</reference>
<comment type="catalytic activity">
    <reaction evidence="2">
        <text>[thioredoxin]-dithiol + NADP(+) = [thioredoxin]-disulfide + NADPH + H(+)</text>
        <dbReference type="Rhea" id="RHEA:20345"/>
        <dbReference type="Rhea" id="RHEA-COMP:10698"/>
        <dbReference type="Rhea" id="RHEA-COMP:10700"/>
        <dbReference type="ChEBI" id="CHEBI:15378"/>
        <dbReference type="ChEBI" id="CHEBI:29950"/>
        <dbReference type="ChEBI" id="CHEBI:50058"/>
        <dbReference type="ChEBI" id="CHEBI:57783"/>
        <dbReference type="ChEBI" id="CHEBI:58349"/>
        <dbReference type="EC" id="1.8.1.9"/>
    </reaction>
</comment>
<comment type="cofactor">
    <cofactor evidence="2">
        <name>FAD</name>
        <dbReference type="ChEBI" id="CHEBI:57692"/>
    </cofactor>
    <text evidence="2">Binds 1 FAD per subunit.</text>
</comment>
<comment type="subunit">
    <text evidence="2">Homodimer.</text>
</comment>
<comment type="subcellular location">
    <subcellularLocation>
        <location evidence="1">Cytoplasm</location>
    </subcellularLocation>
</comment>
<comment type="induction">
    <text evidence="3">Expressed from 2 promoters, 1 of which (trxBp1) is under control of SigR, and further transiently induced (about 50-fold) by the thiol-oxidizing agent diamide. Part of the trxB-trxA operon.</text>
</comment>
<comment type="miscellaneous">
    <text evidence="2">The active site is a redox-active disulfide bond.</text>
</comment>
<comment type="similarity">
    <text evidence="5">Belongs to the class-II pyridine nucleotide-disulfide oxidoreductase family.</text>
</comment>
<dbReference type="EC" id="1.8.1.9" evidence="2"/>
<dbReference type="EMBL" id="X92105">
    <property type="protein sequence ID" value="CAA63076.1"/>
    <property type="molecule type" value="Genomic_DNA"/>
</dbReference>
<dbReference type="EMBL" id="X92104">
    <property type="protein sequence ID" value="CAA63075.1"/>
    <property type="molecule type" value="Genomic_DNA"/>
</dbReference>
<dbReference type="EMBL" id="AJ007313">
    <property type="protein sequence ID" value="CAA07451.1"/>
    <property type="molecule type" value="Genomic_DNA"/>
</dbReference>
<dbReference type="EMBL" id="AL939118">
    <property type="protein sequence ID" value="CAB42713.1"/>
    <property type="molecule type" value="Genomic_DNA"/>
</dbReference>
<dbReference type="PIR" id="T36577">
    <property type="entry name" value="T36577"/>
</dbReference>
<dbReference type="PIR" id="T42062">
    <property type="entry name" value="T42062"/>
</dbReference>
<dbReference type="RefSeq" id="NP_628076.1">
    <property type="nucleotide sequence ID" value="NC_003888.3"/>
</dbReference>
<dbReference type="SMR" id="P52215"/>
<dbReference type="FunCoup" id="P52215">
    <property type="interactions" value="336"/>
</dbReference>
<dbReference type="STRING" id="100226.gene:17761517"/>
<dbReference type="PaxDb" id="100226-SCO3890"/>
<dbReference type="KEGG" id="sco:SCO3890"/>
<dbReference type="PATRIC" id="fig|100226.15.peg.3963"/>
<dbReference type="eggNOG" id="COG0492">
    <property type="taxonomic scope" value="Bacteria"/>
</dbReference>
<dbReference type="HOGENOM" id="CLU_031864_5_1_11"/>
<dbReference type="InParanoid" id="P52215"/>
<dbReference type="OrthoDB" id="9806179at2"/>
<dbReference type="PhylomeDB" id="P52215"/>
<dbReference type="Proteomes" id="UP000001973">
    <property type="component" value="Chromosome"/>
</dbReference>
<dbReference type="GO" id="GO:0005737">
    <property type="term" value="C:cytoplasm"/>
    <property type="evidence" value="ECO:0007669"/>
    <property type="project" value="UniProtKB-SubCell"/>
</dbReference>
<dbReference type="GO" id="GO:0004791">
    <property type="term" value="F:thioredoxin-disulfide reductase (NADPH) activity"/>
    <property type="evidence" value="ECO:0000318"/>
    <property type="project" value="GO_Central"/>
</dbReference>
<dbReference type="GO" id="GO:0045454">
    <property type="term" value="P:cell redox homeostasis"/>
    <property type="evidence" value="ECO:0000318"/>
    <property type="project" value="GO_Central"/>
</dbReference>
<dbReference type="GO" id="GO:0019430">
    <property type="term" value="P:removal of superoxide radicals"/>
    <property type="evidence" value="ECO:0007669"/>
    <property type="project" value="InterPro"/>
</dbReference>
<dbReference type="Gene3D" id="3.50.50.60">
    <property type="entry name" value="FAD/NAD(P)-binding domain"/>
    <property type="match status" value="2"/>
</dbReference>
<dbReference type="InterPro" id="IPR036188">
    <property type="entry name" value="FAD/NAD-bd_sf"/>
</dbReference>
<dbReference type="InterPro" id="IPR023753">
    <property type="entry name" value="FAD/NAD-binding_dom"/>
</dbReference>
<dbReference type="InterPro" id="IPR050097">
    <property type="entry name" value="Ferredoxin-NADP_redctase_2"/>
</dbReference>
<dbReference type="InterPro" id="IPR008255">
    <property type="entry name" value="Pyr_nucl-diS_OxRdtase_2_AS"/>
</dbReference>
<dbReference type="InterPro" id="IPR005982">
    <property type="entry name" value="Thioredox_Rdtase"/>
</dbReference>
<dbReference type="NCBIfam" id="TIGR01292">
    <property type="entry name" value="TRX_reduct"/>
    <property type="match status" value="1"/>
</dbReference>
<dbReference type="PANTHER" id="PTHR48105">
    <property type="entry name" value="THIOREDOXIN REDUCTASE 1-RELATED-RELATED"/>
    <property type="match status" value="1"/>
</dbReference>
<dbReference type="Pfam" id="PF07992">
    <property type="entry name" value="Pyr_redox_2"/>
    <property type="match status" value="1"/>
</dbReference>
<dbReference type="PRINTS" id="PR00368">
    <property type="entry name" value="FADPNR"/>
</dbReference>
<dbReference type="PRINTS" id="PR00469">
    <property type="entry name" value="PNDRDTASEII"/>
</dbReference>
<dbReference type="SUPFAM" id="SSF51905">
    <property type="entry name" value="FAD/NAD(P)-binding domain"/>
    <property type="match status" value="1"/>
</dbReference>
<dbReference type="PROSITE" id="PS00573">
    <property type="entry name" value="PYRIDINE_REDOX_2"/>
    <property type="match status" value="1"/>
</dbReference>
<sequence length="322" mass="34156">MSDVRNVIIIGSGPAGYTAALYTARASLKPLVFEGAVTAGGALMNTTEVENFPGFQDGIMGPELMDNMRAQAERFGAELIPDDVVAVDLSGEIKTVTDTAGTVHRAKAVIVTTGSQHRKLGLPNEDALSGRGVSWCATCDGFFFKDQDIAVIGGGDTAMEEATFLSRFAKSVTIVHRRDTLRASKAMQERAFADPKISFVWDSEVAEVQGDQKLAGLKLRNVKTGELSDLPVTGLFIAIGHDPRTELFKGQLDLDPEGYLKVDAPSTRTNLTGVFGAGDVVDHTYRQAITAAGTGCSAAVDAEPFLAALSDEDKAEPEKTAV</sequence>
<protein>
    <recommendedName>
        <fullName>Thioredoxin reductase</fullName>
        <shortName>TRXR</shortName>
        <ecNumber evidence="2">1.8.1.9</ecNumber>
    </recommendedName>
</protein>
<keyword id="KW-0963">Cytoplasm</keyword>
<keyword id="KW-1015">Disulfide bond</keyword>
<keyword id="KW-0274">FAD</keyword>
<keyword id="KW-0285">Flavoprotein</keyword>
<keyword id="KW-0521">NADP</keyword>
<keyword id="KW-0560">Oxidoreductase</keyword>
<keyword id="KW-0676">Redox-active center</keyword>
<keyword id="KW-1185">Reference proteome</keyword>
<evidence type="ECO:0000250" key="1"/>
<evidence type="ECO:0000250" key="2">
    <source>
        <dbReference type="UniProtKB" id="P9WHH1"/>
    </source>
</evidence>
<evidence type="ECO:0000269" key="3">
    <source>
    </source>
</evidence>
<evidence type="ECO:0000303" key="4">
    <source>
    </source>
</evidence>
<evidence type="ECO:0000305" key="5"/>
<feature type="initiator methionine" description="Removed" evidence="1">
    <location>
        <position position="1"/>
    </location>
</feature>
<feature type="chain" id="PRO_0000166753" description="Thioredoxin reductase">
    <location>
        <begin position="2"/>
        <end position="322"/>
    </location>
</feature>
<feature type="binding site" evidence="2">
    <location>
        <begin position="12"/>
        <end position="15"/>
    </location>
    <ligand>
        <name>FAD</name>
        <dbReference type="ChEBI" id="CHEBI:57692"/>
    </ligand>
</feature>
<feature type="binding site" evidence="2">
    <location>
        <begin position="34"/>
        <end position="42"/>
    </location>
    <ligand>
        <name>FAD</name>
        <dbReference type="ChEBI" id="CHEBI:57692"/>
    </ligand>
</feature>
<feature type="binding site" evidence="2">
    <location>
        <position position="51"/>
    </location>
    <ligand>
        <name>FAD</name>
        <dbReference type="ChEBI" id="CHEBI:57692"/>
    </ligand>
</feature>
<feature type="binding site" evidence="2">
    <location>
        <position position="84"/>
    </location>
    <ligand>
        <name>FAD</name>
        <dbReference type="ChEBI" id="CHEBI:57692"/>
    </ligand>
</feature>
<feature type="binding site" evidence="2">
    <location>
        <position position="176"/>
    </location>
    <ligand>
        <name>NADP(+)</name>
        <dbReference type="ChEBI" id="CHEBI:58349"/>
    </ligand>
</feature>
<feature type="binding site" evidence="2">
    <location>
        <position position="182"/>
    </location>
    <ligand>
        <name>NADP(+)</name>
        <dbReference type="ChEBI" id="CHEBI:58349"/>
    </ligand>
</feature>
<feature type="binding site" evidence="2">
    <location>
        <position position="239"/>
    </location>
    <ligand>
        <name>NADP(+)</name>
        <dbReference type="ChEBI" id="CHEBI:58349"/>
    </ligand>
</feature>
<feature type="binding site" evidence="2">
    <location>
        <position position="259"/>
    </location>
    <ligand>
        <name>NADP(+)</name>
        <dbReference type="ChEBI" id="CHEBI:58349"/>
    </ligand>
</feature>
<feature type="binding site" evidence="2">
    <location>
        <position position="279"/>
    </location>
    <ligand>
        <name>FAD</name>
        <dbReference type="ChEBI" id="CHEBI:57692"/>
    </ligand>
</feature>
<feature type="binding site" evidence="2">
    <location>
        <begin position="286"/>
        <end position="289"/>
    </location>
    <ligand>
        <name>FAD</name>
        <dbReference type="ChEBI" id="CHEBI:57692"/>
    </ligand>
</feature>
<feature type="binding site" evidence="2">
    <location>
        <position position="286"/>
    </location>
    <ligand>
        <name>NADP(+)</name>
        <dbReference type="ChEBI" id="CHEBI:58349"/>
    </ligand>
</feature>
<feature type="disulfide bond" description="Redox-active" evidence="2">
    <location>
        <begin position="136"/>
        <end position="139"/>
    </location>
</feature>
<feature type="sequence conflict" description="In Ref. 1; CAA63075/CAA07451." evidence="5" ref="1">
    <original>A</original>
    <variation>R</variation>
    <location>
        <position position="26"/>
    </location>
</feature>
<feature type="sequence conflict" description="In Ref. 1; CAA63075/CAA07451." evidence="5" ref="1">
    <original>ER</original>
    <variation>DG</variation>
    <location>
        <begin position="73"/>
        <end position="74"/>
    </location>
</feature>
<feature type="sequence conflict" description="In Ref. 1; CAA63075." evidence="5" ref="1">
    <location>
        <position position="155"/>
    </location>
</feature>
<feature type="sequence conflict" description="In Ref. 1; CAA63075." evidence="5" ref="1">
    <original>G</original>
    <variation>A</variation>
    <location>
        <position position="234"/>
    </location>
</feature>
<feature type="sequence conflict" description="In Ref. 1; CAA63075." evidence="5" ref="1">
    <location>
        <position position="258"/>
    </location>
</feature>
<feature type="sequence conflict" description="In Ref. 3; CAB42713." evidence="5" ref="3">
    <original>V</original>
    <variation>L</variation>
    <location>
        <position position="300"/>
    </location>
</feature>
<feature type="sequence conflict" description="In Ref. 3; CAB42713." evidence="5" ref="3">
    <original>P</original>
    <variation>R</variation>
    <location>
        <position position="304"/>
    </location>
</feature>
<name>TRXB_STRCO</name>